<proteinExistence type="inferred from homology"/>
<gene>
    <name type="primary">dpo</name>
</gene>
<sequence length="1045" mass="120261">MTTKTVIKTKSYKLYDFNVYDGFSKAENLGKNGYDKFKDNKKFIIQMFGINTAGQTASIIVEDFNPFYYIKVGDDWTESDRCEFVSHIKGKLGVYYEDSIVASKLVKRHKLYGFDDNKLHTFIKISFTNTGAYNRAKKMFYIDSNVDGVFKRELLPDGYLYEETKCYLYEANIPPLLKLFHIQEISPSGWVQIQTDKITKMRQKSTHCAYEYITSYKHLKKADKDDIVKYSICSFDIEASSSHGDFPVPIKDYKKLATNILEYYNEMEDKTKFDVTCFKKHINAGYGYERCPDIATVYPKLKNISNEQLDNIFSNFMLYIPAKDQSRKDYIKENEESDSESDNDDEEDKKENDGADEAAAFHKRHKKVKKYNKTANILQIIQDDKCEHDTKLFELNKALTKFYPELEGDMVTFIGMTFLNYSDKKPHTRYIIVKGGCEVPEKYKSWVLENNVKIIEKTTEKGVLLEFTKIMTLENPHIVTGYNINGFDFDFMFKRSKEIGCTEDFLKLSKNIDEVCMTKDWKTGEMEIAKNKIVLASGEYNLSFVNMPGRIIVDMCVVFRREYTLSSNKLDYVSSYFISDSVKKIDVDKENNQTRIYSKNLTGLTVGCYVKFDEVSHSTNNYKKGQKFEILDINLDTASFLIDSAEELDLKKYKINWGLAKDDVSVQEIFELANKSDIDRFTVGKYCLGDCDNVIWLLIKVDIITDKVEMSNLCDVPLNFLLQRGQGIKLQSYVSKKCGEKNTLMPIVEKNLNDGGYEGAHVFNPKTGLYLEDPVACVDYSSLYPSSMISENLSHDSKVWTKEYDLSNNLIHSTGEKDADENFIYDNLPNYTYVDVKYDTYEYLRKTPKAAEKKTVVGYKICRFAQFPKGKAIMPAILEDLLSARKATKKLMGKEEDPFKQNIYDKRQLSIKVTANSLYGQCGARTSAFYEKDVAASCTAIGRKLLFYGKDVIEGCYNNVEITLSDGVKVVTKAECVYGDTDSVFFKFNLKTPEGKRIINKQALIYTIELAKQAGELATKFLKKPTRFRVRENILAFQSIIQEKI</sequence>
<keyword id="KW-0235">DNA replication</keyword>
<keyword id="KW-0238">DNA-binding</keyword>
<keyword id="KW-0239">DNA-directed DNA polymerase</keyword>
<keyword id="KW-0548">Nucleotidyltransferase</keyword>
<keyword id="KW-0808">Transferase</keyword>
<keyword id="KW-1194">Viral DNA replication</keyword>
<name>DPOL_PPV01</name>
<reference key="1">
    <citation type="journal article" date="2008" name="Appl. Environ. Microbiol.">
        <title>Phylogenetic analysis of members of the Phycodnaviridae virus family, using amplified fragments of the major capsid protein gene.</title>
        <authorList>
            <person name="Larsen J.B."/>
            <person name="Larsen A."/>
            <person name="Bratbak G."/>
            <person name="Sandaa R.A."/>
        </authorList>
    </citation>
    <scope>NUCLEOTIDE SEQUENCE [GENOMIC DNA]</scope>
</reference>
<comment type="catalytic activity">
    <reaction>
        <text>DNA(n) + a 2'-deoxyribonucleoside 5'-triphosphate = DNA(n+1) + diphosphate</text>
        <dbReference type="Rhea" id="RHEA:22508"/>
        <dbReference type="Rhea" id="RHEA-COMP:17339"/>
        <dbReference type="Rhea" id="RHEA-COMP:17340"/>
        <dbReference type="ChEBI" id="CHEBI:33019"/>
        <dbReference type="ChEBI" id="CHEBI:61560"/>
        <dbReference type="ChEBI" id="CHEBI:173112"/>
        <dbReference type="EC" id="2.7.7.7"/>
    </reaction>
</comment>
<comment type="similarity">
    <text evidence="2">Belongs to the DNA polymerase type-B family.</text>
</comment>
<evidence type="ECO:0000256" key="1">
    <source>
        <dbReference type="SAM" id="MobiDB-lite"/>
    </source>
</evidence>
<evidence type="ECO:0000305" key="2"/>
<organismHost>
    <name type="scientific">Phaeocystis pouchetii</name>
    <dbReference type="NCBI Taxonomy" id="33659"/>
</organismHost>
<dbReference type="EC" id="2.7.7.7"/>
<dbReference type="EMBL" id="EU006634">
    <property type="protein sequence ID" value="ABU23718.1"/>
    <property type="molecule type" value="Genomic_DNA"/>
</dbReference>
<dbReference type="GO" id="GO:0003677">
    <property type="term" value="F:DNA binding"/>
    <property type="evidence" value="ECO:0007669"/>
    <property type="project" value="UniProtKB-KW"/>
</dbReference>
<dbReference type="GO" id="GO:0003887">
    <property type="term" value="F:DNA-directed DNA polymerase activity"/>
    <property type="evidence" value="ECO:0007669"/>
    <property type="project" value="UniProtKB-KW"/>
</dbReference>
<dbReference type="GO" id="GO:0000166">
    <property type="term" value="F:nucleotide binding"/>
    <property type="evidence" value="ECO:0007669"/>
    <property type="project" value="InterPro"/>
</dbReference>
<dbReference type="GO" id="GO:0006261">
    <property type="term" value="P:DNA-templated DNA replication"/>
    <property type="evidence" value="ECO:0007669"/>
    <property type="project" value="TreeGrafter"/>
</dbReference>
<dbReference type="GO" id="GO:0039693">
    <property type="term" value="P:viral DNA genome replication"/>
    <property type="evidence" value="ECO:0007669"/>
    <property type="project" value="UniProtKB-KW"/>
</dbReference>
<dbReference type="Gene3D" id="3.30.342.10">
    <property type="entry name" value="DNA Polymerase, chain B, domain 1"/>
    <property type="match status" value="1"/>
</dbReference>
<dbReference type="Gene3D" id="1.10.287.690">
    <property type="entry name" value="Helix hairpin bin"/>
    <property type="match status" value="1"/>
</dbReference>
<dbReference type="Gene3D" id="3.90.1600.10">
    <property type="entry name" value="Palm domain of DNA polymerase"/>
    <property type="match status" value="1"/>
</dbReference>
<dbReference type="Gene3D" id="3.30.420.10">
    <property type="entry name" value="Ribonuclease H-like superfamily/Ribonuclease H"/>
    <property type="match status" value="1"/>
</dbReference>
<dbReference type="InterPro" id="IPR006172">
    <property type="entry name" value="DNA-dir_DNA_pol_B"/>
</dbReference>
<dbReference type="InterPro" id="IPR006133">
    <property type="entry name" value="DNA-dir_DNA_pol_B_exonuc"/>
</dbReference>
<dbReference type="InterPro" id="IPR006134">
    <property type="entry name" value="DNA-dir_DNA_pol_B_multi_dom"/>
</dbReference>
<dbReference type="InterPro" id="IPR043502">
    <property type="entry name" value="DNA/RNA_pol_sf"/>
</dbReference>
<dbReference type="InterPro" id="IPR023211">
    <property type="entry name" value="DNA_pol_palm_dom_sf"/>
</dbReference>
<dbReference type="InterPro" id="IPR050240">
    <property type="entry name" value="DNA_pol_type-B"/>
</dbReference>
<dbReference type="InterPro" id="IPR012337">
    <property type="entry name" value="RNaseH-like_sf"/>
</dbReference>
<dbReference type="InterPro" id="IPR036397">
    <property type="entry name" value="RNaseH_sf"/>
</dbReference>
<dbReference type="PANTHER" id="PTHR10322">
    <property type="entry name" value="DNA POLYMERASE CATALYTIC SUBUNIT"/>
    <property type="match status" value="1"/>
</dbReference>
<dbReference type="PANTHER" id="PTHR10322:SF23">
    <property type="entry name" value="DNA POLYMERASE DELTA CATALYTIC SUBUNIT"/>
    <property type="match status" value="1"/>
</dbReference>
<dbReference type="Pfam" id="PF00136">
    <property type="entry name" value="DNA_pol_B"/>
    <property type="match status" value="1"/>
</dbReference>
<dbReference type="Pfam" id="PF03104">
    <property type="entry name" value="DNA_pol_B_exo1"/>
    <property type="match status" value="2"/>
</dbReference>
<dbReference type="PRINTS" id="PR00106">
    <property type="entry name" value="DNAPOLB"/>
</dbReference>
<dbReference type="SMART" id="SM00486">
    <property type="entry name" value="POLBc"/>
    <property type="match status" value="1"/>
</dbReference>
<dbReference type="SUPFAM" id="SSF56672">
    <property type="entry name" value="DNA/RNA polymerases"/>
    <property type="match status" value="1"/>
</dbReference>
<dbReference type="SUPFAM" id="SSF53098">
    <property type="entry name" value="Ribonuclease H-like"/>
    <property type="match status" value="1"/>
</dbReference>
<organism>
    <name type="scientific">Phaeocystis pouchetii virus</name>
    <name type="common">PpV01</name>
    <dbReference type="NCBI Taxonomy" id="455365"/>
    <lineage>
        <taxon>Viruses</taxon>
        <taxon>Varidnaviria</taxon>
        <taxon>Bamfordvirae</taxon>
        <taxon>Nucleocytoviricota</taxon>
        <taxon>Megaviricetes</taxon>
        <taxon>Algavirales</taxon>
        <taxon>Phycodnaviridae</taxon>
    </lineage>
</organism>
<protein>
    <recommendedName>
        <fullName>DNA polymerase</fullName>
        <ecNumber>2.7.7.7</ecNumber>
    </recommendedName>
</protein>
<feature type="chain" id="PRO_0000338009" description="DNA polymerase">
    <location>
        <begin position="1"/>
        <end position="1045"/>
    </location>
</feature>
<feature type="region of interest" description="Disordered" evidence="1">
    <location>
        <begin position="331"/>
        <end position="355"/>
    </location>
</feature>
<feature type="compositionally biased region" description="Acidic residues" evidence="1">
    <location>
        <begin position="335"/>
        <end position="348"/>
    </location>
</feature>
<accession>A7U6F3</accession>